<geneLocation type="plasmid">
    <name>pTu 32</name>
</geneLocation>
<keyword id="KW-0238">DNA-binding</keyword>
<keyword id="KW-0614">Plasmid</keyword>
<keyword id="KW-0804">Transcription</keyword>
<keyword id="KW-0805">Transcription regulation</keyword>
<sequence length="205" mass="24342">MISINIVGEVDSILIESILELDRRITINSSNIDPNFIIVYEKFDEYYTFLKEFIGKIPIVIITGNTSYSRKCYFYSLGIDLYIIKNNESKSLILCRILNEIKKYIKYVNDDFIDFENHQFVFNNYLVNLSNIELKILRCLYINLGRYVSKEELKKGVWDTEDFVDSNTINVYIHRLRDSLKNCKEIEIINERKLGYKILIRKDLC</sequence>
<feature type="chain" id="PRO_0000086989" description="Putative epidermin response regulator">
    <location>
        <begin position="1"/>
        <end position="205"/>
    </location>
</feature>
<feature type="DNA-binding region" description="OmpR/PhoB-type" evidence="1">
    <location>
        <begin position="103"/>
        <end position="200"/>
    </location>
</feature>
<proteinExistence type="predicted"/>
<dbReference type="EMBL" id="X62386">
    <property type="protein sequence ID" value="CAA44256.1"/>
    <property type="molecule type" value="Genomic_DNA"/>
</dbReference>
<dbReference type="PIR" id="S23419">
    <property type="entry name" value="S23419"/>
</dbReference>
<dbReference type="RefSeq" id="WP_340129466.1">
    <property type="nucleotide sequence ID" value="NZ_JBBLOV010000015.1"/>
</dbReference>
<dbReference type="SMR" id="P30198"/>
<dbReference type="GO" id="GO:0003677">
    <property type="term" value="F:DNA binding"/>
    <property type="evidence" value="ECO:0007669"/>
    <property type="project" value="UniProtKB-KW"/>
</dbReference>
<dbReference type="GO" id="GO:0000160">
    <property type="term" value="P:phosphorelay signal transduction system"/>
    <property type="evidence" value="ECO:0007669"/>
    <property type="project" value="InterPro"/>
</dbReference>
<dbReference type="GO" id="GO:0006355">
    <property type="term" value="P:regulation of DNA-templated transcription"/>
    <property type="evidence" value="ECO:0007669"/>
    <property type="project" value="InterPro"/>
</dbReference>
<dbReference type="CDD" id="cd00383">
    <property type="entry name" value="trans_reg_C"/>
    <property type="match status" value="1"/>
</dbReference>
<dbReference type="Gene3D" id="1.10.10.10">
    <property type="entry name" value="Winged helix-like DNA-binding domain superfamily/Winged helix DNA-binding domain"/>
    <property type="match status" value="1"/>
</dbReference>
<dbReference type="InterPro" id="IPR001867">
    <property type="entry name" value="OmpR/PhoB-type_DNA-bd"/>
</dbReference>
<dbReference type="InterPro" id="IPR016032">
    <property type="entry name" value="Sig_transdc_resp-reg_C-effctor"/>
</dbReference>
<dbReference type="InterPro" id="IPR036388">
    <property type="entry name" value="WH-like_DNA-bd_sf"/>
</dbReference>
<dbReference type="Pfam" id="PF00486">
    <property type="entry name" value="Trans_reg_C"/>
    <property type="match status" value="1"/>
</dbReference>
<dbReference type="SMART" id="SM00862">
    <property type="entry name" value="Trans_reg_C"/>
    <property type="match status" value="1"/>
</dbReference>
<dbReference type="SUPFAM" id="SSF46894">
    <property type="entry name" value="C-terminal effector domain of the bipartite response regulators"/>
    <property type="match status" value="1"/>
</dbReference>
<dbReference type="PROSITE" id="PS51755">
    <property type="entry name" value="OMPR_PHOB"/>
    <property type="match status" value="1"/>
</dbReference>
<protein>
    <recommendedName>
        <fullName>Putative epidermin response regulator</fullName>
    </recommendedName>
</protein>
<comment type="similarity">
    <text evidence="2">To the C-terminus of E.coli phosphate regulon transcriptional regulatory protein PhoB.</text>
</comment>
<evidence type="ECO:0000255" key="1">
    <source>
        <dbReference type="PROSITE-ProRule" id="PRU01091"/>
    </source>
</evidence>
<evidence type="ECO:0000305" key="2"/>
<gene>
    <name type="primary">epiQ</name>
</gene>
<reference key="1">
    <citation type="journal article" date="1992" name="Eur. J. Biochem.">
        <title>Analysis of genes involved in the biosynthesis of lantibiotic epidermin.</title>
        <authorList>
            <person name="Schnell N."/>
            <person name="Engelke G."/>
            <person name="Augustin J."/>
            <person name="Rosenstein R."/>
            <person name="Ungermann V."/>
            <person name="Goetz F."/>
            <person name="Entian K.-D."/>
        </authorList>
    </citation>
    <scope>NUCLEOTIDE SEQUENCE [GENOMIC DNA]</scope>
    <source>
        <strain>TU 3298 / DSM 3095</strain>
    </source>
</reference>
<organism>
    <name type="scientific">Staphylococcus epidermidis</name>
    <dbReference type="NCBI Taxonomy" id="1282"/>
    <lineage>
        <taxon>Bacteria</taxon>
        <taxon>Bacillati</taxon>
        <taxon>Bacillota</taxon>
        <taxon>Bacilli</taxon>
        <taxon>Bacillales</taxon>
        <taxon>Staphylococcaceae</taxon>
        <taxon>Staphylococcus</taxon>
    </lineage>
</organism>
<name>EPIQ_STAEP</name>
<accession>P30198</accession>